<protein>
    <recommendedName>
        <fullName evidence="1">Glutamine--fructose-6-phosphate aminotransferase [isomerizing]</fullName>
        <ecNumber evidence="1">2.6.1.16</ecNumber>
    </recommendedName>
    <alternativeName>
        <fullName evidence="1">D-fructose-6-phosphate amidotransferase</fullName>
    </alternativeName>
    <alternativeName>
        <fullName evidence="1">GFAT</fullName>
    </alternativeName>
    <alternativeName>
        <fullName evidence="1">Glucosamine-6-phosphate synthase</fullName>
    </alternativeName>
    <alternativeName>
        <fullName evidence="1">Hexosephosphate aminotransferase</fullName>
    </alternativeName>
    <alternativeName>
        <fullName evidence="1">L-glutamine--D-fructose-6-phosphate amidotransferase</fullName>
    </alternativeName>
</protein>
<evidence type="ECO:0000255" key="1">
    <source>
        <dbReference type="HAMAP-Rule" id="MF_00164"/>
    </source>
</evidence>
<evidence type="ECO:0000305" key="2"/>
<gene>
    <name evidence="1" type="primary">glmS</name>
    <name type="ordered locus">CPn_0968</name>
    <name type="ordered locus">CP_0892</name>
    <name type="ordered locus">CpB1005</name>
</gene>
<keyword id="KW-0032">Aminotransferase</keyword>
<keyword id="KW-0963">Cytoplasm</keyword>
<keyword id="KW-0315">Glutamine amidotransferase</keyword>
<keyword id="KW-0677">Repeat</keyword>
<keyword id="KW-0808">Transferase</keyword>
<sequence>MCGIFGYLGNQDGVSIVLEGLAKLEYRGYDSAGLAAVVEQELFIRKTVGRVQELSNLFQEREIPTASVIGHTRWATHGVPTEINAHPHVDEGRSCAVVHNGIIENFKELRRELTAQGISFASDTDSEIIVQLFSLYYQESQDLVFSFCQTLAQLRGSVACALIHKDHPHTILCASQESPLILGLGKEETFIASDSRAFFKYTRHSQALASGEFAIVSQGKEPEVYNLELKKIHKDVRQITCSEDASDKSGYGYYMLKEIYDQPEVLEGLIQKHMDEEGHILSEFLSDVPIKSFKEITIVACGSSYHAGYLAKYIIESLVSIPVHIEVASEFRYRRPYIGKDTLGILISQSGETADTLAALKELRRRNIAYLLGICNVPESAIALGVDHCLFLEAGVEIGVATTKAFTSQLLLLVFLGLKLANVHGALTHAEQCSFGQGLQSLPDLCQKLLANESLHSWAQPYSYEDKFLFLGRRLMYPVVMEAALKLKEIAYIEANAYPGGEMKHGPIALISKGTPVIAFCGDDIVYEKMIGNMMEVKARHAHVIAIAPESREDIAAVSDQQIFVPDCHFLAAPVLYTIVGQVMAYAMALAKGMEIDCPRNLAKSVTVE</sequence>
<proteinExistence type="inferred from homology"/>
<accession>Q9Z6U0</accession>
<accession>Q9JRV0</accession>
<organism>
    <name type="scientific">Chlamydia pneumoniae</name>
    <name type="common">Chlamydophila pneumoniae</name>
    <dbReference type="NCBI Taxonomy" id="83558"/>
    <lineage>
        <taxon>Bacteria</taxon>
        <taxon>Pseudomonadati</taxon>
        <taxon>Chlamydiota</taxon>
        <taxon>Chlamydiia</taxon>
        <taxon>Chlamydiales</taxon>
        <taxon>Chlamydiaceae</taxon>
        <taxon>Chlamydia/Chlamydophila group</taxon>
        <taxon>Chlamydia</taxon>
    </lineage>
</organism>
<dbReference type="EC" id="2.6.1.16" evidence="1"/>
<dbReference type="EMBL" id="AE001363">
    <property type="protein sequence ID" value="AAD19104.1"/>
    <property type="molecule type" value="Genomic_DNA"/>
</dbReference>
<dbReference type="EMBL" id="AE002161">
    <property type="protein sequence ID" value="AAF38679.1"/>
    <property type="molecule type" value="Genomic_DNA"/>
</dbReference>
<dbReference type="EMBL" id="BA000008">
    <property type="protein sequence ID" value="BAA99176.1"/>
    <property type="molecule type" value="Genomic_DNA"/>
</dbReference>
<dbReference type="EMBL" id="AE009440">
    <property type="protein sequence ID" value="AAP98934.1"/>
    <property type="molecule type" value="Genomic_DNA"/>
</dbReference>
<dbReference type="PIR" id="B81528">
    <property type="entry name" value="B81528"/>
</dbReference>
<dbReference type="PIR" id="E72012">
    <property type="entry name" value="E72012"/>
</dbReference>
<dbReference type="PIR" id="F86611">
    <property type="entry name" value="F86611"/>
</dbReference>
<dbReference type="RefSeq" id="NP_225161.1">
    <property type="nucleotide sequence ID" value="NC_000922.1"/>
</dbReference>
<dbReference type="RefSeq" id="WP_010883601.1">
    <property type="nucleotide sequence ID" value="NZ_LN847257.1"/>
</dbReference>
<dbReference type="RefSeq" id="WP_010892213.1">
    <property type="nucleotide sequence ID" value="NZ_LN846995.1"/>
</dbReference>
<dbReference type="SMR" id="Q9Z6U0"/>
<dbReference type="STRING" id="406984.CPK_ORF00383"/>
<dbReference type="GeneID" id="45051025"/>
<dbReference type="KEGG" id="cpa:CP_0892"/>
<dbReference type="KEGG" id="cpj:glmS"/>
<dbReference type="KEGG" id="cpn:CPn_0968"/>
<dbReference type="KEGG" id="cpt:CpB1005"/>
<dbReference type="PATRIC" id="fig|115713.3.peg.1059"/>
<dbReference type="eggNOG" id="COG0449">
    <property type="taxonomic scope" value="Bacteria"/>
</dbReference>
<dbReference type="HOGENOM" id="CLU_012520_5_2_0"/>
<dbReference type="OrthoDB" id="106547at2"/>
<dbReference type="Proteomes" id="UP000000583">
    <property type="component" value="Chromosome"/>
</dbReference>
<dbReference type="Proteomes" id="UP000000801">
    <property type="component" value="Chromosome"/>
</dbReference>
<dbReference type="GO" id="GO:0005829">
    <property type="term" value="C:cytosol"/>
    <property type="evidence" value="ECO:0007669"/>
    <property type="project" value="TreeGrafter"/>
</dbReference>
<dbReference type="GO" id="GO:0097367">
    <property type="term" value="F:carbohydrate derivative binding"/>
    <property type="evidence" value="ECO:0007669"/>
    <property type="project" value="InterPro"/>
</dbReference>
<dbReference type="GO" id="GO:0004360">
    <property type="term" value="F:glutamine-fructose-6-phosphate transaminase (isomerizing) activity"/>
    <property type="evidence" value="ECO:0007669"/>
    <property type="project" value="UniProtKB-UniRule"/>
</dbReference>
<dbReference type="GO" id="GO:0005975">
    <property type="term" value="P:carbohydrate metabolic process"/>
    <property type="evidence" value="ECO:0007669"/>
    <property type="project" value="UniProtKB-UniRule"/>
</dbReference>
<dbReference type="GO" id="GO:0006002">
    <property type="term" value="P:fructose 6-phosphate metabolic process"/>
    <property type="evidence" value="ECO:0007669"/>
    <property type="project" value="TreeGrafter"/>
</dbReference>
<dbReference type="GO" id="GO:0006487">
    <property type="term" value="P:protein N-linked glycosylation"/>
    <property type="evidence" value="ECO:0007669"/>
    <property type="project" value="TreeGrafter"/>
</dbReference>
<dbReference type="GO" id="GO:0006047">
    <property type="term" value="P:UDP-N-acetylglucosamine metabolic process"/>
    <property type="evidence" value="ECO:0007669"/>
    <property type="project" value="TreeGrafter"/>
</dbReference>
<dbReference type="CDD" id="cd00714">
    <property type="entry name" value="GFAT"/>
    <property type="match status" value="1"/>
</dbReference>
<dbReference type="CDD" id="cd05008">
    <property type="entry name" value="SIS_GlmS_GlmD_1"/>
    <property type="match status" value="1"/>
</dbReference>
<dbReference type="CDD" id="cd05009">
    <property type="entry name" value="SIS_GlmS_GlmD_2"/>
    <property type="match status" value="1"/>
</dbReference>
<dbReference type="FunFam" id="3.40.50.10490:FF:000001">
    <property type="entry name" value="Glutamine--fructose-6-phosphate aminotransferase [isomerizing]"/>
    <property type="match status" value="1"/>
</dbReference>
<dbReference type="FunFam" id="3.60.20.10:FF:000006">
    <property type="entry name" value="Glutamine--fructose-6-phosphate aminotransferase [isomerizing]"/>
    <property type="match status" value="1"/>
</dbReference>
<dbReference type="Gene3D" id="3.40.50.10490">
    <property type="entry name" value="Glucose-6-phosphate isomerase like protein, domain 1"/>
    <property type="match status" value="2"/>
</dbReference>
<dbReference type="Gene3D" id="3.60.20.10">
    <property type="entry name" value="Glutamine Phosphoribosylpyrophosphate, subunit 1, domain 1"/>
    <property type="match status" value="1"/>
</dbReference>
<dbReference type="HAMAP" id="MF_00164">
    <property type="entry name" value="GlmS"/>
    <property type="match status" value="1"/>
</dbReference>
<dbReference type="InterPro" id="IPR017932">
    <property type="entry name" value="GATase_2_dom"/>
</dbReference>
<dbReference type="InterPro" id="IPR005855">
    <property type="entry name" value="GFAT"/>
</dbReference>
<dbReference type="InterPro" id="IPR047084">
    <property type="entry name" value="GFAT_N"/>
</dbReference>
<dbReference type="InterPro" id="IPR035466">
    <property type="entry name" value="GlmS/AgaS_SIS"/>
</dbReference>
<dbReference type="InterPro" id="IPR035490">
    <property type="entry name" value="GlmS/FrlB_SIS"/>
</dbReference>
<dbReference type="InterPro" id="IPR029055">
    <property type="entry name" value="Ntn_hydrolases_N"/>
</dbReference>
<dbReference type="InterPro" id="IPR001347">
    <property type="entry name" value="SIS_dom"/>
</dbReference>
<dbReference type="InterPro" id="IPR046348">
    <property type="entry name" value="SIS_dom_sf"/>
</dbReference>
<dbReference type="NCBIfam" id="TIGR01135">
    <property type="entry name" value="glmS"/>
    <property type="match status" value="1"/>
</dbReference>
<dbReference type="NCBIfam" id="NF001484">
    <property type="entry name" value="PRK00331.1"/>
    <property type="match status" value="1"/>
</dbReference>
<dbReference type="PANTHER" id="PTHR10937">
    <property type="entry name" value="GLUCOSAMINE--FRUCTOSE-6-PHOSPHATE AMINOTRANSFERASE, ISOMERIZING"/>
    <property type="match status" value="1"/>
</dbReference>
<dbReference type="PANTHER" id="PTHR10937:SF0">
    <property type="entry name" value="GLUTAMINE--FRUCTOSE-6-PHOSPHATE TRANSAMINASE (ISOMERIZING)"/>
    <property type="match status" value="1"/>
</dbReference>
<dbReference type="Pfam" id="PF13522">
    <property type="entry name" value="GATase_6"/>
    <property type="match status" value="1"/>
</dbReference>
<dbReference type="Pfam" id="PF01380">
    <property type="entry name" value="SIS"/>
    <property type="match status" value="2"/>
</dbReference>
<dbReference type="SUPFAM" id="SSF56235">
    <property type="entry name" value="N-terminal nucleophile aminohydrolases (Ntn hydrolases)"/>
    <property type="match status" value="1"/>
</dbReference>
<dbReference type="SUPFAM" id="SSF53697">
    <property type="entry name" value="SIS domain"/>
    <property type="match status" value="1"/>
</dbReference>
<dbReference type="PROSITE" id="PS51278">
    <property type="entry name" value="GATASE_TYPE_2"/>
    <property type="match status" value="1"/>
</dbReference>
<dbReference type="PROSITE" id="PS51464">
    <property type="entry name" value="SIS"/>
    <property type="match status" value="2"/>
</dbReference>
<reference key="1">
    <citation type="journal article" date="1999" name="Nat. Genet.">
        <title>Comparative genomes of Chlamydia pneumoniae and C. trachomatis.</title>
        <authorList>
            <person name="Kalman S."/>
            <person name="Mitchell W.P."/>
            <person name="Marathe R."/>
            <person name="Lammel C.J."/>
            <person name="Fan J."/>
            <person name="Hyman R.W."/>
            <person name="Olinger L."/>
            <person name="Grimwood J."/>
            <person name="Davis R.W."/>
            <person name="Stephens R.S."/>
        </authorList>
    </citation>
    <scope>NUCLEOTIDE SEQUENCE [LARGE SCALE GENOMIC DNA]</scope>
    <source>
        <strain>CWL029</strain>
    </source>
</reference>
<reference key="2">
    <citation type="journal article" date="2000" name="Nucleic Acids Res.">
        <title>Genome sequences of Chlamydia trachomatis MoPn and Chlamydia pneumoniae AR39.</title>
        <authorList>
            <person name="Read T.D."/>
            <person name="Brunham R.C."/>
            <person name="Shen C."/>
            <person name="Gill S.R."/>
            <person name="Heidelberg J.F."/>
            <person name="White O."/>
            <person name="Hickey E.K."/>
            <person name="Peterson J.D."/>
            <person name="Utterback T.R."/>
            <person name="Berry K.J."/>
            <person name="Bass S."/>
            <person name="Linher K.D."/>
            <person name="Weidman J.F."/>
            <person name="Khouri H.M."/>
            <person name="Craven B."/>
            <person name="Bowman C."/>
            <person name="Dodson R.J."/>
            <person name="Gwinn M.L."/>
            <person name="Nelson W.C."/>
            <person name="DeBoy R.T."/>
            <person name="Kolonay J.F."/>
            <person name="McClarty G."/>
            <person name="Salzberg S.L."/>
            <person name="Eisen J.A."/>
            <person name="Fraser C.M."/>
        </authorList>
    </citation>
    <scope>NUCLEOTIDE SEQUENCE [LARGE SCALE GENOMIC DNA]</scope>
    <source>
        <strain>AR39</strain>
    </source>
</reference>
<reference key="3">
    <citation type="journal article" date="2000" name="Nucleic Acids Res.">
        <title>Comparison of whole genome sequences of Chlamydia pneumoniae J138 from Japan and CWL029 from USA.</title>
        <authorList>
            <person name="Shirai M."/>
            <person name="Hirakawa H."/>
            <person name="Kimoto M."/>
            <person name="Tabuchi M."/>
            <person name="Kishi F."/>
            <person name="Ouchi K."/>
            <person name="Shiba T."/>
            <person name="Ishii K."/>
            <person name="Hattori M."/>
            <person name="Kuhara S."/>
            <person name="Nakazawa T."/>
        </authorList>
    </citation>
    <scope>NUCLEOTIDE SEQUENCE [LARGE SCALE GENOMIC DNA]</scope>
    <source>
        <strain>J138</strain>
    </source>
</reference>
<reference key="4">
    <citation type="submission" date="2002-05" db="EMBL/GenBank/DDBJ databases">
        <title>The genome sequence of Chlamydia pneumoniae TW183 and comparison with other Chlamydia strains based on whole genome sequence analysis.</title>
        <authorList>
            <person name="Geng M.M."/>
            <person name="Schuhmacher A."/>
            <person name="Muehldorfer I."/>
            <person name="Bensch K.W."/>
            <person name="Schaefer K.P."/>
            <person name="Schneider S."/>
            <person name="Pohl T."/>
            <person name="Essig A."/>
            <person name="Marre R."/>
            <person name="Melchers K."/>
        </authorList>
    </citation>
    <scope>NUCLEOTIDE SEQUENCE [LARGE SCALE GENOMIC DNA]</scope>
    <source>
        <strain>TW-183</strain>
    </source>
</reference>
<feature type="initiator methionine" description="Removed" evidence="1">
    <location>
        <position position="1"/>
    </location>
</feature>
<feature type="chain" id="PRO_0000135319" description="Glutamine--fructose-6-phosphate aminotransferase [isomerizing]">
    <location>
        <begin position="2"/>
        <end position="609"/>
    </location>
</feature>
<feature type="domain" description="Glutamine amidotransferase type-2" evidence="1">
    <location>
        <begin position="2"/>
        <end position="219"/>
    </location>
</feature>
<feature type="domain" description="SIS 1" evidence="1">
    <location>
        <begin position="285"/>
        <end position="426"/>
    </location>
</feature>
<feature type="domain" description="SIS 2" evidence="1">
    <location>
        <begin position="458"/>
        <end position="599"/>
    </location>
</feature>
<feature type="active site" description="Nucleophile; for GATase activity" evidence="1">
    <location>
        <position position="2"/>
    </location>
</feature>
<feature type="active site" description="For Fru-6P isomerization activity" evidence="1">
    <location>
        <position position="604"/>
    </location>
</feature>
<feature type="sequence conflict" description="In Ref. 1; AAD19104." evidence="2" ref="1">
    <original>I</original>
    <variation>T</variation>
    <location>
        <position position="321"/>
    </location>
</feature>
<comment type="function">
    <text evidence="1">Catalyzes the first step in hexosamine metabolism, converting fructose-6P into glucosamine-6P using glutamine as a nitrogen source.</text>
</comment>
<comment type="catalytic activity">
    <reaction evidence="1">
        <text>D-fructose 6-phosphate + L-glutamine = D-glucosamine 6-phosphate + L-glutamate</text>
        <dbReference type="Rhea" id="RHEA:13237"/>
        <dbReference type="ChEBI" id="CHEBI:29985"/>
        <dbReference type="ChEBI" id="CHEBI:58359"/>
        <dbReference type="ChEBI" id="CHEBI:58725"/>
        <dbReference type="ChEBI" id="CHEBI:61527"/>
        <dbReference type="EC" id="2.6.1.16"/>
    </reaction>
</comment>
<comment type="subunit">
    <text evidence="1">Homodimer.</text>
</comment>
<comment type="subcellular location">
    <subcellularLocation>
        <location evidence="1">Cytoplasm</location>
    </subcellularLocation>
</comment>
<name>GLMS_CHLPN</name>